<proteinExistence type="evidence at protein level"/>
<name>PHHA_ASPNC</name>
<organism>
    <name type="scientific">Aspergillus niger (strain ATCC MYA-4892 / CBS 513.88 / FGSC A1513)</name>
    <dbReference type="NCBI Taxonomy" id="425011"/>
    <lineage>
        <taxon>Eukaryota</taxon>
        <taxon>Fungi</taxon>
        <taxon>Dikarya</taxon>
        <taxon>Ascomycota</taxon>
        <taxon>Pezizomycotina</taxon>
        <taxon>Eurotiomycetes</taxon>
        <taxon>Eurotiomycetidae</taxon>
        <taxon>Eurotiales</taxon>
        <taxon>Aspergillaceae</taxon>
        <taxon>Aspergillus</taxon>
        <taxon>Aspergillus subgen. Circumdati</taxon>
    </lineage>
</organism>
<evidence type="ECO:0000250" key="1">
    <source>
        <dbReference type="UniProtKB" id="A2QTW5"/>
    </source>
</evidence>
<evidence type="ECO:0000250" key="2">
    <source>
        <dbReference type="UniProtKB" id="Q6SSJ6"/>
    </source>
</evidence>
<evidence type="ECO:0000255" key="3"/>
<evidence type="ECO:0000269" key="4">
    <source ref="2"/>
</evidence>
<evidence type="ECO:0000303" key="5">
    <source ref="2"/>
</evidence>
<evidence type="ECO:0000305" key="6"/>
<dbReference type="EC" id="1.14.13.33" evidence="4"/>
<dbReference type="EMBL" id="AM270053">
    <property type="protein sequence ID" value="CAK47774.1"/>
    <property type="molecule type" value="Genomic_DNA"/>
</dbReference>
<dbReference type="RefSeq" id="XP_001390216.1">
    <property type="nucleotide sequence ID" value="XM_001390179.1"/>
</dbReference>
<dbReference type="SMR" id="A2QGH7"/>
<dbReference type="EnsemblFungi" id="CAK47774">
    <property type="protein sequence ID" value="CAK47774"/>
    <property type="gene ID" value="An03g03330"/>
</dbReference>
<dbReference type="GeneID" id="4980323"/>
<dbReference type="KEGG" id="ang:An03g03330"/>
<dbReference type="VEuPathDB" id="FungiDB:An03g03330"/>
<dbReference type="HOGENOM" id="CLU_009665_9_3_1"/>
<dbReference type="Proteomes" id="UP000006706">
    <property type="component" value="Chromosome 6R"/>
</dbReference>
<dbReference type="GO" id="GO:0016020">
    <property type="term" value="C:membrane"/>
    <property type="evidence" value="ECO:0007669"/>
    <property type="project" value="UniProtKB-SubCell"/>
</dbReference>
<dbReference type="GO" id="GO:0106355">
    <property type="term" value="F:4-hydroxybenzoate 3-monooxygenase (NADH) activity"/>
    <property type="evidence" value="ECO:0007669"/>
    <property type="project" value="RHEA"/>
</dbReference>
<dbReference type="GO" id="GO:0106356">
    <property type="term" value="F:4-hydroxybenzoate 3-monooxygenase (NADPH) activity"/>
    <property type="evidence" value="ECO:0007669"/>
    <property type="project" value="RHEA"/>
</dbReference>
<dbReference type="GO" id="GO:0071949">
    <property type="term" value="F:FAD binding"/>
    <property type="evidence" value="ECO:0007669"/>
    <property type="project" value="InterPro"/>
</dbReference>
<dbReference type="GO" id="GO:0018662">
    <property type="term" value="F:phenol 2-monooxygenase activity"/>
    <property type="evidence" value="ECO:0007669"/>
    <property type="project" value="UniProtKB-EC"/>
</dbReference>
<dbReference type="CDD" id="cd02979">
    <property type="entry name" value="PHOX_C"/>
    <property type="match status" value="1"/>
</dbReference>
<dbReference type="Gene3D" id="3.40.30.20">
    <property type="match status" value="1"/>
</dbReference>
<dbReference type="Gene3D" id="3.30.9.10">
    <property type="entry name" value="D-Amino Acid Oxidase, subunit A, domain 2"/>
    <property type="match status" value="1"/>
</dbReference>
<dbReference type="Gene3D" id="3.50.50.60">
    <property type="entry name" value="FAD/NAD(P)-binding domain"/>
    <property type="match status" value="1"/>
</dbReference>
<dbReference type="InterPro" id="IPR002938">
    <property type="entry name" value="FAD-bd"/>
</dbReference>
<dbReference type="InterPro" id="IPR036188">
    <property type="entry name" value="FAD/NAD-bd_sf"/>
</dbReference>
<dbReference type="InterPro" id="IPR012941">
    <property type="entry name" value="Phe_hydrox_C_dim_dom"/>
</dbReference>
<dbReference type="InterPro" id="IPR038220">
    <property type="entry name" value="PHOX_C_sf"/>
</dbReference>
<dbReference type="InterPro" id="IPR050641">
    <property type="entry name" value="RIFMO-like"/>
</dbReference>
<dbReference type="InterPro" id="IPR036249">
    <property type="entry name" value="Thioredoxin-like_sf"/>
</dbReference>
<dbReference type="PANTHER" id="PTHR43004:SF7">
    <property type="entry name" value="P-HYDROXYBENZOATE-M-HYDROXYLASE"/>
    <property type="match status" value="1"/>
</dbReference>
<dbReference type="PANTHER" id="PTHR43004">
    <property type="entry name" value="TRK SYSTEM POTASSIUM UPTAKE PROTEIN"/>
    <property type="match status" value="1"/>
</dbReference>
<dbReference type="Pfam" id="PF01494">
    <property type="entry name" value="FAD_binding_3"/>
    <property type="match status" value="1"/>
</dbReference>
<dbReference type="Pfam" id="PF07976">
    <property type="entry name" value="Phe_hydrox_dim"/>
    <property type="match status" value="1"/>
</dbReference>
<dbReference type="PRINTS" id="PR00420">
    <property type="entry name" value="RNGMNOXGNASE"/>
</dbReference>
<dbReference type="SUPFAM" id="SSF54373">
    <property type="entry name" value="FAD-linked reductases, C-terminal domain"/>
    <property type="match status" value="1"/>
</dbReference>
<dbReference type="SUPFAM" id="SSF51905">
    <property type="entry name" value="FAD/NAD(P)-binding domain"/>
    <property type="match status" value="1"/>
</dbReference>
<dbReference type="SUPFAM" id="SSF52833">
    <property type="entry name" value="Thioredoxin-like"/>
    <property type="match status" value="1"/>
</dbReference>
<accession>A2QGH7</accession>
<reference key="1">
    <citation type="journal article" date="2007" name="Nat. Biotechnol.">
        <title>Genome sequencing and analysis of the versatile cell factory Aspergillus niger CBS 513.88.</title>
        <authorList>
            <person name="Pel H.J."/>
            <person name="de Winde J.H."/>
            <person name="Archer D.B."/>
            <person name="Dyer P.S."/>
            <person name="Hofmann G."/>
            <person name="Schaap P.J."/>
            <person name="Turner G."/>
            <person name="de Vries R.P."/>
            <person name="Albang R."/>
            <person name="Albermann K."/>
            <person name="Andersen M.R."/>
            <person name="Bendtsen J.D."/>
            <person name="Benen J.A.E."/>
            <person name="van den Berg M."/>
            <person name="Breestraat S."/>
            <person name="Caddick M.X."/>
            <person name="Contreras R."/>
            <person name="Cornell M."/>
            <person name="Coutinho P.M."/>
            <person name="Danchin E.G.J."/>
            <person name="Debets A.J.M."/>
            <person name="Dekker P."/>
            <person name="van Dijck P.W.M."/>
            <person name="van Dijk A."/>
            <person name="Dijkhuizen L."/>
            <person name="Driessen A.J.M."/>
            <person name="d'Enfert C."/>
            <person name="Geysens S."/>
            <person name="Goosen C."/>
            <person name="Groot G.S.P."/>
            <person name="de Groot P.W.J."/>
            <person name="Guillemette T."/>
            <person name="Henrissat B."/>
            <person name="Herweijer M."/>
            <person name="van den Hombergh J.P.T.W."/>
            <person name="van den Hondel C.A.M.J.J."/>
            <person name="van der Heijden R.T.J.M."/>
            <person name="van der Kaaij R.M."/>
            <person name="Klis F.M."/>
            <person name="Kools H.J."/>
            <person name="Kubicek C.P."/>
            <person name="van Kuyk P.A."/>
            <person name="Lauber J."/>
            <person name="Lu X."/>
            <person name="van der Maarel M.J.E.C."/>
            <person name="Meulenberg R."/>
            <person name="Menke H."/>
            <person name="Mortimer M.A."/>
            <person name="Nielsen J."/>
            <person name="Oliver S.G."/>
            <person name="Olsthoorn M."/>
            <person name="Pal K."/>
            <person name="van Peij N.N.M.E."/>
            <person name="Ram A.F.J."/>
            <person name="Rinas U."/>
            <person name="Roubos J.A."/>
            <person name="Sagt C.M.J."/>
            <person name="Schmoll M."/>
            <person name="Sun J."/>
            <person name="Ussery D."/>
            <person name="Varga J."/>
            <person name="Vervecken W."/>
            <person name="van de Vondervoort P.J.J."/>
            <person name="Wedler H."/>
            <person name="Woesten H.A.B."/>
            <person name="Zeng A.-P."/>
            <person name="van Ooyen A.J.J."/>
            <person name="Visser J."/>
            <person name="Stam H."/>
        </authorList>
    </citation>
    <scope>NUCLEOTIDE SEQUENCE [LARGE SCALE GENOMIC DNA]</scope>
    <source>
        <strain>ATCC MYA-4892 / CBS 513.88 / FGSC A1513</strain>
    </source>
</reference>
<reference key="2">
    <citation type="journal article" date="2019" name="ACS Sustain. Chem. Eng.">
        <title>Discovery of novel p-hydroxybenzoate-m-hydroxylase, protocatechuate 3,4 ring-cleavage dioxygenase, and hydroxyquinol 1,2 ring-cleavage dioxygenase from the filamentous fungus Aspergillus niger.</title>
        <authorList>
            <person name="Lubbers R.J.M."/>
            <person name="Dilokpimol A."/>
            <person name="Peng M."/>
            <person name="Visser J."/>
            <person name="Makela M.R."/>
            <person name="Hilden K.S."/>
            <person name="de Vries R.P."/>
        </authorList>
    </citation>
    <scope>INDUCTION</scope>
    <scope>FUNCTION</scope>
    <scope>DISRUPTION PHENOTYPE</scope>
    <scope>CATALYTIC ACTIVITY</scope>
</reference>
<feature type="chain" id="PRO_0000453616" description="p-hydroxybenzoate-m-hydroxylase A">
    <location>
        <begin position="1"/>
        <end position="636"/>
    </location>
</feature>
<feature type="transmembrane region" description="Helical" evidence="3">
    <location>
        <begin position="11"/>
        <end position="28"/>
    </location>
</feature>
<feature type="binding site" evidence="2">
    <location>
        <begin position="10"/>
        <end position="39"/>
    </location>
    <ligand>
        <name>FAD</name>
        <dbReference type="ChEBI" id="CHEBI:57692"/>
    </ligand>
</feature>
<feature type="binding site" evidence="2">
    <location>
        <begin position="241"/>
        <end position="243"/>
    </location>
    <ligand>
        <name>FAD</name>
        <dbReference type="ChEBI" id="CHEBI:57692"/>
    </ligand>
</feature>
<feature type="binding site" evidence="2">
    <location>
        <position position="289"/>
    </location>
    <ligand>
        <name>FAD</name>
        <dbReference type="ChEBI" id="CHEBI:57692"/>
    </ligand>
</feature>
<feature type="binding site" evidence="2">
    <location>
        <position position="310"/>
    </location>
    <ligand>
        <name>FAD</name>
        <dbReference type="ChEBI" id="CHEBI:57692"/>
    </ligand>
</feature>
<keyword id="KW-0274">FAD</keyword>
<keyword id="KW-0285">Flavoprotein</keyword>
<keyword id="KW-0472">Membrane</keyword>
<keyword id="KW-0560">Oxidoreductase</keyword>
<keyword id="KW-1185">Reference proteome</keyword>
<keyword id="KW-0812">Transmembrane</keyword>
<keyword id="KW-1133">Transmembrane helix</keyword>
<gene>
    <name evidence="5" type="primary">phhA</name>
    <name type="ORF">An03g03330</name>
</gene>
<comment type="function">
    <text evidence="1 4">FAD-dependent monooxygenase; part of the benzoic acid degradation pathway also known as the protocatechuic acid pathway (Ref.2). Benzoic acid debradation begins with the conversion of benzoic acid into 4-hydroxybenzoic acid through hydroxylation by the benzoate-4-monooxygenase bphA, and its partner NADPH-cytochrome P450 reductase cprA which act as a mediator in electron donation from NADPH (By similarity). 4-Hydroxybenzoic acid is then converted into 3,4-dihydroxybenzoic acid (also called protocatechuic acid) by the p-hydroxybenzoate-m-hydroxylase phhA (Ref.2). Protocatechuic acid is converted into 3-carboxy-cis,cis-muconic acid by the intradiol ring-cleavage dioxygenase prcA, which is further metabolized through the 3-oxoadipate pathway to finally enter the tricarboxylic acid cycle (TCA) (Ref.2).</text>
</comment>
<comment type="catalytic activity">
    <reaction evidence="4">
        <text>4-hydroxybenzoate + NADH + O2 + H(+) = 3,4-dihydroxybenzoate + NAD(+) + H2O</text>
        <dbReference type="Rhea" id="RHEA:19473"/>
        <dbReference type="ChEBI" id="CHEBI:15377"/>
        <dbReference type="ChEBI" id="CHEBI:15378"/>
        <dbReference type="ChEBI" id="CHEBI:15379"/>
        <dbReference type="ChEBI" id="CHEBI:17879"/>
        <dbReference type="ChEBI" id="CHEBI:36241"/>
        <dbReference type="ChEBI" id="CHEBI:57540"/>
        <dbReference type="ChEBI" id="CHEBI:57945"/>
        <dbReference type="EC" id="1.14.13.33"/>
    </reaction>
    <physiologicalReaction direction="left-to-right" evidence="4">
        <dbReference type="Rhea" id="RHEA:19474"/>
    </physiologicalReaction>
</comment>
<comment type="catalytic activity">
    <reaction evidence="4">
        <text>4-hydroxybenzoate + NADPH + O2 + H(+) = 3,4-dihydroxybenzoate + NADP(+) + H2O</text>
        <dbReference type="Rhea" id="RHEA:19477"/>
        <dbReference type="ChEBI" id="CHEBI:15377"/>
        <dbReference type="ChEBI" id="CHEBI:15378"/>
        <dbReference type="ChEBI" id="CHEBI:15379"/>
        <dbReference type="ChEBI" id="CHEBI:17879"/>
        <dbReference type="ChEBI" id="CHEBI:36241"/>
        <dbReference type="ChEBI" id="CHEBI:57783"/>
        <dbReference type="ChEBI" id="CHEBI:58349"/>
        <dbReference type="EC" id="1.14.13.33"/>
    </reaction>
    <physiologicalReaction direction="left-to-right" evidence="4">
        <dbReference type="Rhea" id="RHEA:19478"/>
    </physiologicalReaction>
</comment>
<comment type="cofactor">
    <cofactor evidence="2">
        <name>FAD</name>
        <dbReference type="ChEBI" id="CHEBI:57692"/>
    </cofactor>
    <text evidence="2">Binds 1 FAD per subunit.</text>
</comment>
<comment type="subcellular location">
    <subcellularLocation>
        <location evidence="3">Membrane</location>
        <topology evidence="3">Single-pass membrane protein</topology>
    </subcellularLocation>
</comment>
<comment type="induction">
    <text evidence="4">Expression is induced in the presence of caffeic acid, p-coumaric acid, p-hydroxybenzoic acid, protocatechuic acid, and benzoic acid.</text>
</comment>
<comment type="disruption phenotype">
    <text evidence="4">Abolishes growth on benzoic acid, benzaldehyde, benzyl alcohol, p-anisic acid, p-anisyl alcohol, and p-hydroxybenzoic acid; and reduces growth on p-coumaric acid and cinnamic acid.</text>
</comment>
<comment type="similarity">
    <text evidence="6">Belongs to the PheA/TfdB FAD monooxygenase family.</text>
</comment>
<protein>
    <recommendedName>
        <fullName evidence="5">p-hydroxybenzoate-m-hydroxylase A</fullName>
        <ecNumber evidence="4">1.14.13.33</ecNumber>
    </recommendedName>
    <alternativeName>
        <fullName evidence="5">4-hydroxybenzoate-3-monooxygenase phhA</fullName>
    </alternativeName>
    <alternativeName>
        <fullName evidence="6">FAD-dependent monooxygenase phhA</fullName>
    </alternativeName>
</protein>
<sequence>MAPSQQEKYDIVIVGAGPVGIVLSLCMSRWGYKVKHIDNRPVPTATGRADGIQPRSTEILRNLGLKRQIMAFKPAKVYDVAFWDPLPGGQGIHRTGSWPSCPRFIDTRYPFTTLVHQGKIERVFLDEIQKAGTTVERPWTIVGFKNDGLDETYPVEVQLKSIDTNVIETVRTKYLFSGEGARSFIRQQLGIQIQYKDPISYVWGVMDGVVRTNFPDIETKCTIHSDAGSIMVIPREDNMVRLYVQIASSDDPDFDPRKTATAEDVQATARKILQPYWVEWDRVEWYSVYPIGQGISEKYTLDERVFMGGDACHTHSPKAGQGMNTAFHDALNMAWKLHAVESGLAKRSILSTYETERKDIAETLLSFDNKYAALFSKRRPTAGEVGEASHTTAAAGGEEDEFVKTFKSSCEFTSGYGVAYKPNVFTWDATHPAQSPLFDVPGVRLTPGRAFTPTTVTRLADSNHVHLEQEIPANGAFRIFIFAGKQDKTSKAITDLAANLEKERSFLSVYRRADIADVSFFENHLPHSKLFSICLVYAGEKNQIDVDSIPKILRDYHHHLYADNIPDVRVPQATYAAHEKLGFDVEKGGVVVTRPDSHVACTVQLSEGSGTVDALNAFFGSFATKPLGQDSQQSRL</sequence>